<reference key="1">
    <citation type="submission" date="2006-12" db="EMBL/GenBank/DDBJ databases">
        <title>Complete sequence of Halorhodospira halophila SL1.</title>
        <authorList>
            <consortium name="US DOE Joint Genome Institute"/>
            <person name="Copeland A."/>
            <person name="Lucas S."/>
            <person name="Lapidus A."/>
            <person name="Barry K."/>
            <person name="Detter J.C."/>
            <person name="Glavina del Rio T."/>
            <person name="Hammon N."/>
            <person name="Israni S."/>
            <person name="Dalin E."/>
            <person name="Tice H."/>
            <person name="Pitluck S."/>
            <person name="Saunders E."/>
            <person name="Brettin T."/>
            <person name="Bruce D."/>
            <person name="Han C."/>
            <person name="Tapia R."/>
            <person name="Schmutz J."/>
            <person name="Larimer F."/>
            <person name="Land M."/>
            <person name="Hauser L."/>
            <person name="Kyrpides N."/>
            <person name="Mikhailova N."/>
            <person name="Hoff W."/>
            <person name="Richardson P."/>
        </authorList>
    </citation>
    <scope>NUCLEOTIDE SEQUENCE [LARGE SCALE GENOMIC DNA]</scope>
    <source>
        <strain>DSM 244 / SL1</strain>
    </source>
</reference>
<proteinExistence type="inferred from homology"/>
<keyword id="KW-1185">Reference proteome</keyword>
<keyword id="KW-0687">Ribonucleoprotein</keyword>
<keyword id="KW-0689">Ribosomal protein</keyword>
<keyword id="KW-0694">RNA-binding</keyword>
<keyword id="KW-0699">rRNA-binding</keyword>
<keyword id="KW-0820">tRNA-binding</keyword>
<gene>
    <name evidence="1" type="primary">rplE</name>
    <name type="ordered locus">Hhal_0846</name>
</gene>
<accession>A1WVB0</accession>
<sequence length="179" mass="20517">MATLRKVYREEVTPALKERFGYQNVMQVPQLQKIVINMGLGEATKDKKILEAAQEDLAKIAGQKPVVTRARKSVAGFKIREGWPIGCKVTLRRDRMYEFLERFIHVASPRVRDFRGFSPRSFDGRGNYNLGIREQLIFPEIDYDEIDRVRGMDITVSTTARTDAEGKALLEGFGFPFRT</sequence>
<evidence type="ECO:0000255" key="1">
    <source>
        <dbReference type="HAMAP-Rule" id="MF_01333"/>
    </source>
</evidence>
<evidence type="ECO:0000305" key="2"/>
<organism>
    <name type="scientific">Halorhodospira halophila (strain DSM 244 / SL1)</name>
    <name type="common">Ectothiorhodospira halophila (strain DSM 244 / SL1)</name>
    <dbReference type="NCBI Taxonomy" id="349124"/>
    <lineage>
        <taxon>Bacteria</taxon>
        <taxon>Pseudomonadati</taxon>
        <taxon>Pseudomonadota</taxon>
        <taxon>Gammaproteobacteria</taxon>
        <taxon>Chromatiales</taxon>
        <taxon>Ectothiorhodospiraceae</taxon>
        <taxon>Halorhodospira</taxon>
    </lineage>
</organism>
<dbReference type="EMBL" id="CP000544">
    <property type="protein sequence ID" value="ABM61622.1"/>
    <property type="molecule type" value="Genomic_DNA"/>
</dbReference>
<dbReference type="RefSeq" id="WP_011813645.1">
    <property type="nucleotide sequence ID" value="NC_008789.1"/>
</dbReference>
<dbReference type="SMR" id="A1WVB0"/>
<dbReference type="STRING" id="349124.Hhal_0846"/>
<dbReference type="KEGG" id="hha:Hhal_0846"/>
<dbReference type="eggNOG" id="COG0094">
    <property type="taxonomic scope" value="Bacteria"/>
</dbReference>
<dbReference type="HOGENOM" id="CLU_061015_2_1_6"/>
<dbReference type="OrthoDB" id="9806626at2"/>
<dbReference type="Proteomes" id="UP000000647">
    <property type="component" value="Chromosome"/>
</dbReference>
<dbReference type="GO" id="GO:1990904">
    <property type="term" value="C:ribonucleoprotein complex"/>
    <property type="evidence" value="ECO:0007669"/>
    <property type="project" value="UniProtKB-KW"/>
</dbReference>
<dbReference type="GO" id="GO:0005840">
    <property type="term" value="C:ribosome"/>
    <property type="evidence" value="ECO:0007669"/>
    <property type="project" value="UniProtKB-KW"/>
</dbReference>
<dbReference type="GO" id="GO:0019843">
    <property type="term" value="F:rRNA binding"/>
    <property type="evidence" value="ECO:0007669"/>
    <property type="project" value="UniProtKB-UniRule"/>
</dbReference>
<dbReference type="GO" id="GO:0003735">
    <property type="term" value="F:structural constituent of ribosome"/>
    <property type="evidence" value="ECO:0007669"/>
    <property type="project" value="InterPro"/>
</dbReference>
<dbReference type="GO" id="GO:0000049">
    <property type="term" value="F:tRNA binding"/>
    <property type="evidence" value="ECO:0007669"/>
    <property type="project" value="UniProtKB-UniRule"/>
</dbReference>
<dbReference type="GO" id="GO:0006412">
    <property type="term" value="P:translation"/>
    <property type="evidence" value="ECO:0007669"/>
    <property type="project" value="UniProtKB-UniRule"/>
</dbReference>
<dbReference type="FunFam" id="3.30.1440.10:FF:000001">
    <property type="entry name" value="50S ribosomal protein L5"/>
    <property type="match status" value="1"/>
</dbReference>
<dbReference type="Gene3D" id="3.30.1440.10">
    <property type="match status" value="1"/>
</dbReference>
<dbReference type="HAMAP" id="MF_01333_B">
    <property type="entry name" value="Ribosomal_uL5_B"/>
    <property type="match status" value="1"/>
</dbReference>
<dbReference type="InterPro" id="IPR002132">
    <property type="entry name" value="Ribosomal_uL5"/>
</dbReference>
<dbReference type="InterPro" id="IPR020930">
    <property type="entry name" value="Ribosomal_uL5_bac-type"/>
</dbReference>
<dbReference type="InterPro" id="IPR031309">
    <property type="entry name" value="Ribosomal_uL5_C"/>
</dbReference>
<dbReference type="InterPro" id="IPR020929">
    <property type="entry name" value="Ribosomal_uL5_CS"/>
</dbReference>
<dbReference type="InterPro" id="IPR022803">
    <property type="entry name" value="Ribosomal_uL5_dom_sf"/>
</dbReference>
<dbReference type="InterPro" id="IPR031310">
    <property type="entry name" value="Ribosomal_uL5_N"/>
</dbReference>
<dbReference type="NCBIfam" id="NF000585">
    <property type="entry name" value="PRK00010.1"/>
    <property type="match status" value="1"/>
</dbReference>
<dbReference type="PANTHER" id="PTHR11994">
    <property type="entry name" value="60S RIBOSOMAL PROTEIN L11-RELATED"/>
    <property type="match status" value="1"/>
</dbReference>
<dbReference type="Pfam" id="PF00281">
    <property type="entry name" value="Ribosomal_L5"/>
    <property type="match status" value="1"/>
</dbReference>
<dbReference type="Pfam" id="PF00673">
    <property type="entry name" value="Ribosomal_L5_C"/>
    <property type="match status" value="1"/>
</dbReference>
<dbReference type="PIRSF" id="PIRSF002161">
    <property type="entry name" value="Ribosomal_L5"/>
    <property type="match status" value="1"/>
</dbReference>
<dbReference type="SUPFAM" id="SSF55282">
    <property type="entry name" value="RL5-like"/>
    <property type="match status" value="1"/>
</dbReference>
<dbReference type="PROSITE" id="PS00358">
    <property type="entry name" value="RIBOSOMAL_L5"/>
    <property type="match status" value="1"/>
</dbReference>
<protein>
    <recommendedName>
        <fullName evidence="1">Large ribosomal subunit protein uL5</fullName>
    </recommendedName>
    <alternativeName>
        <fullName evidence="2">50S ribosomal protein L5</fullName>
    </alternativeName>
</protein>
<feature type="chain" id="PRO_1000052746" description="Large ribosomal subunit protein uL5">
    <location>
        <begin position="1"/>
        <end position="179"/>
    </location>
</feature>
<name>RL5_HALHL</name>
<comment type="function">
    <text evidence="1">This is one of the proteins that bind and probably mediate the attachment of the 5S RNA into the large ribosomal subunit, where it forms part of the central protuberance. In the 70S ribosome it contacts protein S13 of the 30S subunit (bridge B1b), connecting the 2 subunits; this bridge is implicated in subunit movement. Contacts the P site tRNA; the 5S rRNA and some of its associated proteins might help stabilize positioning of ribosome-bound tRNAs.</text>
</comment>
<comment type="subunit">
    <text evidence="1">Part of the 50S ribosomal subunit; part of the 5S rRNA/L5/L18/L25 subcomplex. Contacts the 5S rRNA and the P site tRNA. Forms a bridge to the 30S subunit in the 70S ribosome.</text>
</comment>
<comment type="similarity">
    <text evidence="1">Belongs to the universal ribosomal protein uL5 family.</text>
</comment>